<feature type="chain" id="PRO_1000023894" description="Uroporphyrinogen decarboxylase">
    <location>
        <begin position="1"/>
        <end position="333"/>
    </location>
</feature>
<feature type="binding site" evidence="1">
    <location>
        <begin position="21"/>
        <end position="25"/>
    </location>
    <ligand>
        <name>substrate</name>
    </ligand>
</feature>
<feature type="binding site" evidence="1">
    <location>
        <position position="70"/>
    </location>
    <ligand>
        <name>substrate</name>
    </ligand>
</feature>
<feature type="binding site" evidence="1">
    <location>
        <position position="139"/>
    </location>
    <ligand>
        <name>substrate</name>
    </ligand>
</feature>
<feature type="binding site" evidence="1">
    <location>
        <position position="194"/>
    </location>
    <ligand>
        <name>substrate</name>
    </ligand>
</feature>
<feature type="binding site" evidence="1">
    <location>
        <position position="309"/>
    </location>
    <ligand>
        <name>substrate</name>
    </ligand>
</feature>
<feature type="site" description="Transition state stabilizer" evidence="1">
    <location>
        <position position="70"/>
    </location>
</feature>
<gene>
    <name evidence="1" type="primary">hemE</name>
    <name type="ordered locus">CAB844</name>
</gene>
<name>DCUP_CHLAB</name>
<sequence length="333" mass="37315">MSKFYDVIKPKASRPPVWFLRQVGRYMPQYRELKGSQTLKDFFHNTEAITEATLLGPSLLKVDAAILFADILSLLDGFNISYDFAPGPQISFSPKEELIFTNDPQDTFSYLLKAIKNLVKRLSVPLIAFAASPFTMACYLLEGGASKDFPKTMAFLYQHPERFDALLKQLAEATVIYLKEQIQAGASAIQLFESSSLRLPSALFSRYVTRPNTQLITQLKNSVSSPISLFCRCFDENFIDLYSTGADTLHPDYHVNLSQIYTAVTHPGSLQGNIDPALFLLPQDQFLNHLEKYLSVLKHQPKYIFNSGHGILPETPLENVQAAVLCLTSISTS</sequence>
<keyword id="KW-0963">Cytoplasm</keyword>
<keyword id="KW-0210">Decarboxylase</keyword>
<keyword id="KW-0456">Lyase</keyword>
<keyword id="KW-0627">Porphyrin biosynthesis</keyword>
<organism>
    <name type="scientific">Chlamydia abortus (strain DSM 27085 / S26/3)</name>
    <name type="common">Chlamydophila abortus</name>
    <dbReference type="NCBI Taxonomy" id="218497"/>
    <lineage>
        <taxon>Bacteria</taxon>
        <taxon>Pseudomonadati</taxon>
        <taxon>Chlamydiota</taxon>
        <taxon>Chlamydiia</taxon>
        <taxon>Chlamydiales</taxon>
        <taxon>Chlamydiaceae</taxon>
        <taxon>Chlamydia/Chlamydophila group</taxon>
        <taxon>Chlamydia</taxon>
    </lineage>
</organism>
<reference key="1">
    <citation type="journal article" date="2005" name="Genome Res.">
        <title>The Chlamydophila abortus genome sequence reveals an array of variable proteins that contribute to interspecies variation.</title>
        <authorList>
            <person name="Thomson N.R."/>
            <person name="Yeats C."/>
            <person name="Bell K."/>
            <person name="Holden M.T.G."/>
            <person name="Bentley S.D."/>
            <person name="Livingstone M."/>
            <person name="Cerdeno-Tarraga A.-M."/>
            <person name="Harris B."/>
            <person name="Doggett J."/>
            <person name="Ormond D."/>
            <person name="Mungall K."/>
            <person name="Clarke K."/>
            <person name="Feltwell T."/>
            <person name="Hance Z."/>
            <person name="Sanders M."/>
            <person name="Quail M.A."/>
            <person name="Price C."/>
            <person name="Barrell B.G."/>
            <person name="Parkhill J."/>
            <person name="Longbottom D."/>
        </authorList>
    </citation>
    <scope>NUCLEOTIDE SEQUENCE [LARGE SCALE GENOMIC DNA]</scope>
    <source>
        <strain>DSM 27085 / S26/3</strain>
    </source>
</reference>
<comment type="function">
    <text evidence="1">Catalyzes the decarboxylation of four acetate groups of uroporphyrinogen-III to yield coproporphyrinogen-III.</text>
</comment>
<comment type="catalytic activity">
    <reaction evidence="1">
        <text>uroporphyrinogen III + 4 H(+) = coproporphyrinogen III + 4 CO2</text>
        <dbReference type="Rhea" id="RHEA:19865"/>
        <dbReference type="ChEBI" id="CHEBI:15378"/>
        <dbReference type="ChEBI" id="CHEBI:16526"/>
        <dbReference type="ChEBI" id="CHEBI:57308"/>
        <dbReference type="ChEBI" id="CHEBI:57309"/>
        <dbReference type="EC" id="4.1.1.37"/>
    </reaction>
</comment>
<comment type="pathway">
    <text evidence="1">Porphyrin-containing compound metabolism; protoporphyrin-IX biosynthesis; coproporphyrinogen-III from 5-aminolevulinate: step 4/4.</text>
</comment>
<comment type="subunit">
    <text evidence="1">Homodimer.</text>
</comment>
<comment type="subcellular location">
    <subcellularLocation>
        <location evidence="1">Cytoplasm</location>
    </subcellularLocation>
</comment>
<comment type="similarity">
    <text evidence="1">Belongs to the uroporphyrinogen decarboxylase family.</text>
</comment>
<protein>
    <recommendedName>
        <fullName evidence="1">Uroporphyrinogen decarboxylase</fullName>
        <shortName evidence="1">UPD</shortName>
        <shortName evidence="1">URO-D</shortName>
        <ecNumber evidence="1">4.1.1.37</ecNumber>
    </recommendedName>
</protein>
<proteinExistence type="inferred from homology"/>
<accession>Q5L510</accession>
<evidence type="ECO:0000255" key="1">
    <source>
        <dbReference type="HAMAP-Rule" id="MF_00218"/>
    </source>
</evidence>
<dbReference type="EC" id="4.1.1.37" evidence="1"/>
<dbReference type="EMBL" id="CR848038">
    <property type="protein sequence ID" value="CAH64285.1"/>
    <property type="molecule type" value="Genomic_DNA"/>
</dbReference>
<dbReference type="RefSeq" id="WP_011097371.1">
    <property type="nucleotide sequence ID" value="NC_004552.2"/>
</dbReference>
<dbReference type="SMR" id="Q5L510"/>
<dbReference type="KEGG" id="cab:CAB844"/>
<dbReference type="eggNOG" id="COG0407">
    <property type="taxonomic scope" value="Bacteria"/>
</dbReference>
<dbReference type="HOGENOM" id="CLU_040933_0_0_0"/>
<dbReference type="OrthoDB" id="9806656at2"/>
<dbReference type="UniPathway" id="UPA00251">
    <property type="reaction ID" value="UER00321"/>
</dbReference>
<dbReference type="Proteomes" id="UP000001012">
    <property type="component" value="Chromosome"/>
</dbReference>
<dbReference type="GO" id="GO:0005829">
    <property type="term" value="C:cytosol"/>
    <property type="evidence" value="ECO:0007669"/>
    <property type="project" value="TreeGrafter"/>
</dbReference>
<dbReference type="GO" id="GO:0004853">
    <property type="term" value="F:uroporphyrinogen decarboxylase activity"/>
    <property type="evidence" value="ECO:0007669"/>
    <property type="project" value="UniProtKB-UniRule"/>
</dbReference>
<dbReference type="GO" id="GO:0006782">
    <property type="term" value="P:protoporphyrinogen IX biosynthetic process"/>
    <property type="evidence" value="ECO:0007669"/>
    <property type="project" value="UniProtKB-UniRule"/>
</dbReference>
<dbReference type="CDD" id="cd00717">
    <property type="entry name" value="URO-D"/>
    <property type="match status" value="1"/>
</dbReference>
<dbReference type="Gene3D" id="3.20.20.210">
    <property type="match status" value="1"/>
</dbReference>
<dbReference type="HAMAP" id="MF_00218">
    <property type="entry name" value="URO_D"/>
    <property type="match status" value="1"/>
</dbReference>
<dbReference type="InterPro" id="IPR038071">
    <property type="entry name" value="UROD/MetE-like_sf"/>
</dbReference>
<dbReference type="InterPro" id="IPR006361">
    <property type="entry name" value="Uroporphyrinogen_deCO2ase_HemE"/>
</dbReference>
<dbReference type="InterPro" id="IPR000257">
    <property type="entry name" value="Uroporphyrinogen_deCOase"/>
</dbReference>
<dbReference type="NCBIfam" id="TIGR01464">
    <property type="entry name" value="hemE"/>
    <property type="match status" value="1"/>
</dbReference>
<dbReference type="PANTHER" id="PTHR21091">
    <property type="entry name" value="METHYLTETRAHYDROFOLATE:HOMOCYSTEINE METHYLTRANSFERASE RELATED"/>
    <property type="match status" value="1"/>
</dbReference>
<dbReference type="PANTHER" id="PTHR21091:SF169">
    <property type="entry name" value="UROPORPHYRINOGEN DECARBOXYLASE"/>
    <property type="match status" value="1"/>
</dbReference>
<dbReference type="Pfam" id="PF01208">
    <property type="entry name" value="URO-D"/>
    <property type="match status" value="1"/>
</dbReference>
<dbReference type="SUPFAM" id="SSF51726">
    <property type="entry name" value="UROD/MetE-like"/>
    <property type="match status" value="1"/>
</dbReference>
<dbReference type="PROSITE" id="PS00906">
    <property type="entry name" value="UROD_1"/>
    <property type="match status" value="1"/>
</dbReference>
<dbReference type="PROSITE" id="PS00907">
    <property type="entry name" value="UROD_2"/>
    <property type="match status" value="1"/>
</dbReference>